<comment type="function">
    <text evidence="1 3 4">Phospholipid scramblase involved in autophagy and cytoplasm to vacuole transport (Cvt) vesicle formation (PubMed:23950735). Cycles between the preautophagosomal structure/phagophore assembly site (PAS) and the cytoplasmic vesicle pool and supplies membrane for the growing autophagosome (By similarity). Lipid scramblase activity plays a key role in preautophagosomal structure/phagophore assembly by distributing the phospholipids that arrive through atg2 from the cytoplasmic to the luminal leaflet of the bilayer, thereby driving autophagosomal membrane expansion (By similarity). Also involved in endoplasmic reticulum-specific autophagic process and is essential for the survival of cells subjected to severe ER stress (By similarity). Different machineries are required for anterograde trafficking to the PAS during either the Cvt pathway or bulk autophagy and for retrograde trafficking (By similarity). Has a role in meiosis and sporulation (PubMed:19778961).</text>
</comment>
<comment type="catalytic activity">
    <reaction evidence="1">
        <text>a 1,2-diacyl-sn-glycero-3-phosphocholine(in) = a 1,2-diacyl-sn-glycero-3-phosphocholine(out)</text>
        <dbReference type="Rhea" id="RHEA:38571"/>
        <dbReference type="ChEBI" id="CHEBI:57643"/>
    </reaction>
</comment>
<comment type="catalytic activity">
    <reaction evidence="1">
        <text>a 1,2-diacyl-sn-glycero-3-phospho-L-serine(in) = a 1,2-diacyl-sn-glycero-3-phospho-L-serine(out)</text>
        <dbReference type="Rhea" id="RHEA:38663"/>
        <dbReference type="ChEBI" id="CHEBI:57262"/>
    </reaction>
</comment>
<comment type="catalytic activity">
    <reaction evidence="1">
        <text>a 1,2-diacyl-sn-glycero-3-phosphoethanolamine(in) = a 1,2-diacyl-sn-glycero-3-phosphoethanolamine(out)</text>
        <dbReference type="Rhea" id="RHEA:38895"/>
        <dbReference type="ChEBI" id="CHEBI:64612"/>
    </reaction>
</comment>
<comment type="catalytic activity">
    <reaction evidence="1">
        <text>a 1,2-diacyl-sn-glycero-3-phospho-(1D-myo-inositol-3-phosphate)(in) = a 1,2-diacyl-sn-glycero-3-phospho-(1D-myo-inositol-3-phosphate)(out)</text>
        <dbReference type="Rhea" id="RHEA:67920"/>
        <dbReference type="ChEBI" id="CHEBI:58088"/>
    </reaction>
</comment>
<comment type="subunit">
    <text evidence="4 5">Homotrimer; forms a homotrimer with a central pore that forms a path between the two membrane leaflets (PubMed:33106658). Interacts with ctl1 (PubMed:23950735).</text>
</comment>
<comment type="subcellular location">
    <subcellularLocation>
        <location evidence="4">Preautophagosomal structure membrane</location>
        <topology evidence="4">Multi-pass membrane protein</topology>
    </subcellularLocation>
    <subcellularLocation>
        <location evidence="1">Cytoplasmic vesicle membrane</location>
        <topology evidence="1">Multi-pass membrane protein</topology>
    </subcellularLocation>
    <subcellularLocation>
        <location evidence="1">Golgi apparatus membrane</location>
        <topology evidence="1">Multi-pass membrane protein</topology>
    </subcellularLocation>
    <subcellularLocation>
        <location evidence="1">Endoplasmic reticulum membrane</location>
        <topology evidence="1">Multi-pass membrane protein</topology>
    </subcellularLocation>
</comment>
<comment type="domain">
    <text evidence="5">Forms a homotrimer with a solvated central pore, which is connected laterally to the cytosol through the cavity within each protomer (PubMed:33106658). Acts as a lipid scramblase that uses its central pore to function: the central pore opens laterally to accommodate lipid headgroups, thereby enabling lipid flipping and redistribution of lipids added to the outer leaflet of atg9-containing vesicles, thereby enabling growth into autophagosomes (PubMed:33106658).</text>
</comment>
<comment type="PTM">
    <text evidence="1">Phosphorylated by atg1. Atg1 phosphorylation is required for preautophagosome elongation.</text>
</comment>
<comment type="disruption phenotype">
    <text evidence="4">Impairs atg8-processing.</text>
</comment>
<comment type="similarity">
    <text evidence="7">Belongs to the ATG9 family.</text>
</comment>
<proteinExistence type="evidence at protein level"/>
<gene>
    <name evidence="6" type="primary">atg9</name>
    <name type="synonym">apg9</name>
    <name type="ORF">SPBC15D4.07c</name>
</gene>
<dbReference type="EMBL" id="CU329671">
    <property type="protein sequence ID" value="CAA20482.1"/>
    <property type="molecule type" value="Genomic_DNA"/>
</dbReference>
<dbReference type="PIR" id="T39483">
    <property type="entry name" value="T39483"/>
</dbReference>
<dbReference type="RefSeq" id="NP_596247.1">
    <property type="nucleotide sequence ID" value="NM_001022166.2"/>
</dbReference>
<dbReference type="PDB" id="7D0I">
    <property type="method" value="EM"/>
    <property type="resolution" value="3.00 A"/>
    <property type="chains" value="B/D/F/H/J/L=1-702"/>
</dbReference>
<dbReference type="PDBsum" id="7D0I"/>
<dbReference type="EMDB" id="EMD-30535"/>
<dbReference type="SMR" id="O74312"/>
<dbReference type="BioGRID" id="276398">
    <property type="interactions" value="20"/>
</dbReference>
<dbReference type="FunCoup" id="O74312">
    <property type="interactions" value="289"/>
</dbReference>
<dbReference type="STRING" id="284812.O74312"/>
<dbReference type="iPTMnet" id="O74312"/>
<dbReference type="PaxDb" id="4896-SPBC15D4.07c.1"/>
<dbReference type="EnsemblFungi" id="SPBC15D4.07c.1">
    <property type="protein sequence ID" value="SPBC15D4.07c.1:pep"/>
    <property type="gene ID" value="SPBC15D4.07c"/>
</dbReference>
<dbReference type="GeneID" id="2539850"/>
<dbReference type="KEGG" id="spo:2539850"/>
<dbReference type="PomBase" id="SPBC15D4.07c">
    <property type="gene designation" value="atg9"/>
</dbReference>
<dbReference type="VEuPathDB" id="FungiDB:SPBC15D4.07c"/>
<dbReference type="eggNOG" id="KOG2173">
    <property type="taxonomic scope" value="Eukaryota"/>
</dbReference>
<dbReference type="HOGENOM" id="CLU_006200_3_1_1"/>
<dbReference type="InParanoid" id="O74312"/>
<dbReference type="OMA" id="DEHTVWC"/>
<dbReference type="PhylomeDB" id="O74312"/>
<dbReference type="Reactome" id="R-SPO-1632852">
    <property type="pathway name" value="Macroautophagy"/>
</dbReference>
<dbReference type="PRO" id="PR:O74312"/>
<dbReference type="Proteomes" id="UP000002485">
    <property type="component" value="Chromosome II"/>
</dbReference>
<dbReference type="GO" id="GO:0005776">
    <property type="term" value="C:autophagosome"/>
    <property type="evidence" value="ECO:0000318"/>
    <property type="project" value="GO_Central"/>
</dbReference>
<dbReference type="GO" id="GO:0030659">
    <property type="term" value="C:cytoplasmic vesicle membrane"/>
    <property type="evidence" value="ECO:0007669"/>
    <property type="project" value="UniProtKB-SubCell"/>
</dbReference>
<dbReference type="GO" id="GO:0005789">
    <property type="term" value="C:endoplasmic reticulum membrane"/>
    <property type="evidence" value="ECO:0007669"/>
    <property type="project" value="UniProtKB-SubCell"/>
</dbReference>
<dbReference type="GO" id="GO:0000329">
    <property type="term" value="C:fungal-type vacuole membrane"/>
    <property type="evidence" value="ECO:0000314"/>
    <property type="project" value="PomBase"/>
</dbReference>
<dbReference type="GO" id="GO:0000139">
    <property type="term" value="C:Golgi membrane"/>
    <property type="evidence" value="ECO:0007669"/>
    <property type="project" value="UniProtKB-SubCell"/>
</dbReference>
<dbReference type="GO" id="GO:0000407">
    <property type="term" value="C:phagophore assembly site"/>
    <property type="evidence" value="ECO:0000314"/>
    <property type="project" value="PomBase"/>
</dbReference>
<dbReference type="GO" id="GO:0034045">
    <property type="term" value="C:phagophore assembly site membrane"/>
    <property type="evidence" value="ECO:0007669"/>
    <property type="project" value="UniProtKB-SubCell"/>
</dbReference>
<dbReference type="GO" id="GO:0017128">
    <property type="term" value="F:phospholipid scramblase activity"/>
    <property type="evidence" value="ECO:0000250"/>
    <property type="project" value="UniProtKB"/>
</dbReference>
<dbReference type="GO" id="GO:0000045">
    <property type="term" value="P:autophagosome assembly"/>
    <property type="evidence" value="ECO:0000266"/>
    <property type="project" value="PomBase"/>
</dbReference>
<dbReference type="GO" id="GO:0016236">
    <property type="term" value="P:macroautophagy"/>
    <property type="evidence" value="ECO:0000315"/>
    <property type="project" value="PomBase"/>
</dbReference>
<dbReference type="GO" id="GO:0000423">
    <property type="term" value="P:mitophagy"/>
    <property type="evidence" value="ECO:0000318"/>
    <property type="project" value="GO_Central"/>
</dbReference>
<dbReference type="GO" id="GO:0034727">
    <property type="term" value="P:piecemeal microautophagy of the nucleus"/>
    <property type="evidence" value="ECO:0000318"/>
    <property type="project" value="GO_Central"/>
</dbReference>
<dbReference type="GO" id="GO:0034497">
    <property type="term" value="P:protein localization to phagophore assembly site"/>
    <property type="evidence" value="ECO:0000318"/>
    <property type="project" value="GO_Central"/>
</dbReference>
<dbReference type="GO" id="GO:0061709">
    <property type="term" value="P:reticulophagy"/>
    <property type="evidence" value="ECO:0000318"/>
    <property type="project" value="GO_Central"/>
</dbReference>
<dbReference type="InterPro" id="IPR007241">
    <property type="entry name" value="Autophagy-rel_prot_9"/>
</dbReference>
<dbReference type="PANTHER" id="PTHR13038">
    <property type="entry name" value="APG9 AUTOPHAGY 9"/>
    <property type="match status" value="1"/>
</dbReference>
<dbReference type="PANTHER" id="PTHR13038:SF10">
    <property type="entry name" value="AUTOPHAGY-RELATED PROTEIN 9"/>
    <property type="match status" value="1"/>
</dbReference>
<dbReference type="Pfam" id="PF04109">
    <property type="entry name" value="ATG9"/>
    <property type="match status" value="1"/>
</dbReference>
<keyword id="KW-0002">3D-structure</keyword>
<keyword id="KW-0072">Autophagy</keyword>
<keyword id="KW-0968">Cytoplasmic vesicle</keyword>
<keyword id="KW-0256">Endoplasmic reticulum</keyword>
<keyword id="KW-0333">Golgi apparatus</keyword>
<keyword id="KW-0445">Lipid transport</keyword>
<keyword id="KW-0472">Membrane</keyword>
<keyword id="KW-0597">Phosphoprotein</keyword>
<keyword id="KW-1185">Reference proteome</keyword>
<keyword id="KW-0812">Transmembrane</keyword>
<keyword id="KW-1133">Transmembrane helix</keyword>
<keyword id="KW-0813">Transport</keyword>
<protein>
    <recommendedName>
        <fullName evidence="6">Autophagy-related protein 9</fullName>
    </recommendedName>
</protein>
<sequence>MFYQPAQNKKQYDDLADIEAQNNVPNTQEVLEAWQESLDSDEDESSPLEESNGFTISEHDDFVKSVPRKNNPTDLLYSGKLLDSDEPPSVHGNSSKVPSKHPSPSFPETTSLRNLQNGSKQKPALPNFNDPHFYNEDVTRSGHPNRSIYTQLPRNEFSNARVLWNRLSARDRVLWRWANVENLDSFLQQVYTYYTGKGLSCIIVHRLFQILTVSFVIGFTTFITSCIDWPAVTPHGSLAGVTKSQCIAQMSPITYLVLWLFLSFLLALWIYYLTDIPRLWQMREFYIHALKIATADMPTVSWQRVLYRLLKLKNVNALTAEDGRVVSLHNMKRLDAYAIANRIMRKDNYFIALINNGIINIELPLLHRRILTHTTEWNINWCIFNFVFDEQGQLRSAFRNPNSRKRLSEELRRRFIVAGFLNCLFAPIVAIYLVIHNFFRYFNEYHKNPGALSTRRYTPLALWTFREYNELQHFFDERINDSYAAASHYVSQFPDFNMIRLFKYISFILGSFTAILVIITVFDPELMVTFEITKDRSVLFYLGLFGSLIAVSRSIIPDETLVFAPEKALRRVITFTHYMPGWWSDNMHSKAVQQEFCSLYSYRIVNLLWEILGILLTPVLLFFTFPSCSQDIVDFFREHTINVEGVGYVCSYAVFQDNPPYESVASLVQSRKISPLIQNKPELSRISFYEQFNTEAPRRDLR</sequence>
<name>ATG9_SCHPO</name>
<organism>
    <name type="scientific">Schizosaccharomyces pombe (strain 972 / ATCC 24843)</name>
    <name type="common">Fission yeast</name>
    <dbReference type="NCBI Taxonomy" id="284812"/>
    <lineage>
        <taxon>Eukaryota</taxon>
        <taxon>Fungi</taxon>
        <taxon>Dikarya</taxon>
        <taxon>Ascomycota</taxon>
        <taxon>Taphrinomycotina</taxon>
        <taxon>Schizosaccharomycetes</taxon>
        <taxon>Schizosaccharomycetales</taxon>
        <taxon>Schizosaccharomycetaceae</taxon>
        <taxon>Schizosaccharomyces</taxon>
    </lineage>
</organism>
<accession>O74312</accession>
<evidence type="ECO:0000250" key="1">
    <source>
        <dbReference type="UniProtKB" id="Q12142"/>
    </source>
</evidence>
<evidence type="ECO:0000256" key="2">
    <source>
        <dbReference type="SAM" id="MobiDB-lite"/>
    </source>
</evidence>
<evidence type="ECO:0000269" key="3">
    <source>
    </source>
</evidence>
<evidence type="ECO:0000269" key="4">
    <source>
    </source>
</evidence>
<evidence type="ECO:0000269" key="5">
    <source>
    </source>
</evidence>
<evidence type="ECO:0000303" key="6">
    <source>
    </source>
</evidence>
<evidence type="ECO:0000305" key="7"/>
<evidence type="ECO:0000305" key="8">
    <source>
    </source>
</evidence>
<evidence type="ECO:0007744" key="9">
    <source>
        <dbReference type="PDB" id="7D0I"/>
    </source>
</evidence>
<evidence type="ECO:0007829" key="10">
    <source>
        <dbReference type="PDB" id="7D0I"/>
    </source>
</evidence>
<feature type="chain" id="PRO_0000119837" description="Autophagy-related protein 9">
    <location>
        <begin position="1"/>
        <end position="702"/>
    </location>
</feature>
<feature type="topological domain" description="Cytoplasmic" evidence="7">
    <location>
        <begin position="1"/>
        <end position="205"/>
    </location>
</feature>
<feature type="transmembrane region" description="Helical" evidence="5 9">
    <location>
        <begin position="206"/>
        <end position="223"/>
    </location>
</feature>
<feature type="topological domain" description="Lumenal" evidence="7">
    <location>
        <begin position="224"/>
        <end position="251"/>
    </location>
</feature>
<feature type="transmembrane region" description="Helical" evidence="5 9">
    <location>
        <begin position="252"/>
        <end position="270"/>
    </location>
</feature>
<feature type="topological domain" description="Cytoplasmic" evidence="7">
    <location>
        <begin position="271"/>
        <end position="421"/>
    </location>
</feature>
<feature type="intramembrane region" evidence="5 9">
    <location>
        <begin position="422"/>
        <end position="446"/>
    </location>
</feature>
<feature type="topological domain" description="Cytoplasmic" evidence="7">
    <location>
        <begin position="447"/>
        <end position="496"/>
    </location>
</feature>
<feature type="transmembrane region" description="Helical" evidence="5 9">
    <location>
        <begin position="497"/>
        <end position="522"/>
    </location>
</feature>
<feature type="topological domain" description="Lumenal" evidence="7">
    <location>
        <begin position="523"/>
        <end position="537"/>
    </location>
</feature>
<feature type="transmembrane region" description="Helical" evidence="5 9">
    <location>
        <begin position="538"/>
        <end position="555"/>
    </location>
</feature>
<feature type="topological domain" description="Cytoplasmic" evidence="7">
    <location>
        <begin position="556"/>
        <end position="603"/>
    </location>
</feature>
<feature type="intramembrane region" evidence="8">
    <location>
        <begin position="604"/>
        <end position="624"/>
    </location>
</feature>
<feature type="topological domain" description="Cytoplasmic" evidence="7">
    <location>
        <begin position="625"/>
        <end position="702"/>
    </location>
</feature>
<feature type="region of interest" description="Disordered" evidence="2">
    <location>
        <begin position="35"/>
        <end position="128"/>
    </location>
</feature>
<feature type="compositionally biased region" description="Acidic residues" evidence="2">
    <location>
        <begin position="38"/>
        <end position="47"/>
    </location>
</feature>
<feature type="compositionally biased region" description="Low complexity" evidence="2">
    <location>
        <begin position="94"/>
        <end position="107"/>
    </location>
</feature>
<feature type="compositionally biased region" description="Polar residues" evidence="2">
    <location>
        <begin position="108"/>
        <end position="120"/>
    </location>
</feature>
<feature type="helix" evidence="10">
    <location>
        <begin position="183"/>
        <end position="195"/>
    </location>
</feature>
<feature type="helix" evidence="10">
    <location>
        <begin position="198"/>
        <end position="223"/>
    </location>
</feature>
<feature type="helix" evidence="10">
    <location>
        <begin position="253"/>
        <end position="287"/>
    </location>
</feature>
<feature type="turn" evidence="10">
    <location>
        <begin position="297"/>
        <end position="299"/>
    </location>
</feature>
<feature type="helix" evidence="10">
    <location>
        <begin position="302"/>
        <end position="312"/>
    </location>
</feature>
<feature type="helix" evidence="10">
    <location>
        <begin position="336"/>
        <end position="343"/>
    </location>
</feature>
<feature type="helix" evidence="10">
    <location>
        <begin position="345"/>
        <end position="355"/>
    </location>
</feature>
<feature type="turn" evidence="10">
    <location>
        <begin position="364"/>
        <end position="366"/>
    </location>
</feature>
<feature type="helix" evidence="10">
    <location>
        <begin position="373"/>
        <end position="382"/>
    </location>
</feature>
<feature type="helix" evidence="10">
    <location>
        <begin position="384"/>
        <end position="387"/>
    </location>
</feature>
<feature type="strand" evidence="10">
    <location>
        <begin position="390"/>
        <end position="394"/>
    </location>
</feature>
<feature type="helix" evidence="10">
    <location>
        <begin position="396"/>
        <end position="398"/>
    </location>
</feature>
<feature type="helix" evidence="10">
    <location>
        <begin position="401"/>
        <end position="403"/>
    </location>
</feature>
<feature type="helix" evidence="10">
    <location>
        <begin position="404"/>
        <end position="410"/>
    </location>
</feature>
<feature type="helix" evidence="10">
    <location>
        <begin position="412"/>
        <end position="425"/>
    </location>
</feature>
<feature type="helix" evidence="10">
    <location>
        <begin position="427"/>
        <end position="447"/>
    </location>
</feature>
<feature type="helix" evidence="10">
    <location>
        <begin position="449"/>
        <end position="452"/>
    </location>
</feature>
<feature type="strand" evidence="10">
    <location>
        <begin position="455"/>
        <end position="457"/>
    </location>
</feature>
<feature type="helix" evidence="10">
    <location>
        <begin position="461"/>
        <end position="464"/>
    </location>
</feature>
<feature type="helix" evidence="10">
    <location>
        <begin position="472"/>
        <end position="480"/>
    </location>
</feature>
<feature type="helix" evidence="10">
    <location>
        <begin position="483"/>
        <end position="489"/>
    </location>
</feature>
<feature type="helix" evidence="10">
    <location>
        <begin position="496"/>
        <end position="520"/>
    </location>
</feature>
<feature type="helix" evidence="10">
    <location>
        <begin position="538"/>
        <end position="555"/>
    </location>
</feature>
<feature type="helix" evidence="10">
    <location>
        <begin position="565"/>
        <end position="576"/>
    </location>
</feature>
<feature type="helix" evidence="10">
    <location>
        <begin position="581"/>
        <end position="583"/>
    </location>
</feature>
<feature type="helix" evidence="10">
    <location>
        <begin position="591"/>
        <end position="599"/>
    </location>
</feature>
<feature type="strand" evidence="10">
    <location>
        <begin position="600"/>
        <end position="602"/>
    </location>
</feature>
<feature type="helix" evidence="10">
    <location>
        <begin position="603"/>
        <end position="623"/>
    </location>
</feature>
<feature type="helix" evidence="10">
    <location>
        <begin position="626"/>
        <end position="628"/>
    </location>
</feature>
<feature type="helix" evidence="10">
    <location>
        <begin position="629"/>
        <end position="638"/>
    </location>
</feature>
<feature type="strand" evidence="10">
    <location>
        <begin position="640"/>
        <end position="643"/>
    </location>
</feature>
<feature type="turn" evidence="10">
    <location>
        <begin position="644"/>
        <end position="646"/>
    </location>
</feature>
<feature type="strand" evidence="10">
    <location>
        <begin position="647"/>
        <end position="650"/>
    </location>
</feature>
<feature type="turn" evidence="10">
    <location>
        <begin position="651"/>
        <end position="655"/>
    </location>
</feature>
<reference key="1">
    <citation type="journal article" date="2002" name="Nature">
        <title>The genome sequence of Schizosaccharomyces pombe.</title>
        <authorList>
            <person name="Wood V."/>
            <person name="Gwilliam R."/>
            <person name="Rajandream M.A."/>
            <person name="Lyne M.H."/>
            <person name="Lyne R."/>
            <person name="Stewart A."/>
            <person name="Sgouros J.G."/>
            <person name="Peat N."/>
            <person name="Hayles J."/>
            <person name="Baker S.G."/>
            <person name="Basham D."/>
            <person name="Bowman S."/>
            <person name="Brooks K."/>
            <person name="Brown D."/>
            <person name="Brown S."/>
            <person name="Chillingworth T."/>
            <person name="Churcher C.M."/>
            <person name="Collins M."/>
            <person name="Connor R."/>
            <person name="Cronin A."/>
            <person name="Davis P."/>
            <person name="Feltwell T."/>
            <person name="Fraser A."/>
            <person name="Gentles S."/>
            <person name="Goble A."/>
            <person name="Hamlin N."/>
            <person name="Harris D.E."/>
            <person name="Hidalgo J."/>
            <person name="Hodgson G."/>
            <person name="Holroyd S."/>
            <person name="Hornsby T."/>
            <person name="Howarth S."/>
            <person name="Huckle E.J."/>
            <person name="Hunt S."/>
            <person name="Jagels K."/>
            <person name="James K.D."/>
            <person name="Jones L."/>
            <person name="Jones M."/>
            <person name="Leather S."/>
            <person name="McDonald S."/>
            <person name="McLean J."/>
            <person name="Mooney P."/>
            <person name="Moule S."/>
            <person name="Mungall K.L."/>
            <person name="Murphy L.D."/>
            <person name="Niblett D."/>
            <person name="Odell C."/>
            <person name="Oliver K."/>
            <person name="O'Neil S."/>
            <person name="Pearson D."/>
            <person name="Quail M.A."/>
            <person name="Rabbinowitsch E."/>
            <person name="Rutherford K.M."/>
            <person name="Rutter S."/>
            <person name="Saunders D."/>
            <person name="Seeger K."/>
            <person name="Sharp S."/>
            <person name="Skelton J."/>
            <person name="Simmonds M.N."/>
            <person name="Squares R."/>
            <person name="Squares S."/>
            <person name="Stevens K."/>
            <person name="Taylor K."/>
            <person name="Taylor R.G."/>
            <person name="Tivey A."/>
            <person name="Walsh S.V."/>
            <person name="Warren T."/>
            <person name="Whitehead S."/>
            <person name="Woodward J.R."/>
            <person name="Volckaert G."/>
            <person name="Aert R."/>
            <person name="Robben J."/>
            <person name="Grymonprez B."/>
            <person name="Weltjens I."/>
            <person name="Vanstreels E."/>
            <person name="Rieger M."/>
            <person name="Schaefer M."/>
            <person name="Mueller-Auer S."/>
            <person name="Gabel C."/>
            <person name="Fuchs M."/>
            <person name="Duesterhoeft A."/>
            <person name="Fritzc C."/>
            <person name="Holzer E."/>
            <person name="Moestl D."/>
            <person name="Hilbert H."/>
            <person name="Borzym K."/>
            <person name="Langer I."/>
            <person name="Beck A."/>
            <person name="Lehrach H."/>
            <person name="Reinhardt R."/>
            <person name="Pohl T.M."/>
            <person name="Eger P."/>
            <person name="Zimmermann W."/>
            <person name="Wedler H."/>
            <person name="Wambutt R."/>
            <person name="Purnelle B."/>
            <person name="Goffeau A."/>
            <person name="Cadieu E."/>
            <person name="Dreano S."/>
            <person name="Gloux S."/>
            <person name="Lelaure V."/>
            <person name="Mottier S."/>
            <person name="Galibert F."/>
            <person name="Aves S.J."/>
            <person name="Xiang Z."/>
            <person name="Hunt C."/>
            <person name="Moore K."/>
            <person name="Hurst S.M."/>
            <person name="Lucas M."/>
            <person name="Rochet M."/>
            <person name="Gaillardin C."/>
            <person name="Tallada V.A."/>
            <person name="Garzon A."/>
            <person name="Thode G."/>
            <person name="Daga R.R."/>
            <person name="Cruzado L."/>
            <person name="Jimenez J."/>
            <person name="Sanchez M."/>
            <person name="del Rey F."/>
            <person name="Benito J."/>
            <person name="Dominguez A."/>
            <person name="Revuelta J.L."/>
            <person name="Moreno S."/>
            <person name="Armstrong J."/>
            <person name="Forsburg S.L."/>
            <person name="Cerutti L."/>
            <person name="Lowe T."/>
            <person name="McCombie W.R."/>
            <person name="Paulsen I."/>
            <person name="Potashkin J."/>
            <person name="Shpakovski G.V."/>
            <person name="Ussery D."/>
            <person name="Barrell B.G."/>
            <person name="Nurse P."/>
        </authorList>
    </citation>
    <scope>NUCLEOTIDE SEQUENCE [LARGE SCALE GENOMIC DNA]</scope>
    <source>
        <strain>972 / ATCC 24843</strain>
    </source>
</reference>
<reference key="2">
    <citation type="journal article" date="2009" name="Microbiology">
        <title>Autophagy-deficient Schizosaccharomyces pombe mutants undergo partial sporulation during nitrogen starvation.</title>
        <authorList>
            <person name="Mukaiyama H."/>
            <person name="Kajiwara S."/>
            <person name="Hosomi A."/>
            <person name="Giga-Hama Y."/>
            <person name="Tanaka N."/>
            <person name="Nakamura T."/>
            <person name="Takegawa K."/>
        </authorList>
    </citation>
    <scope>FUNCTION</scope>
</reference>
<reference key="3">
    <citation type="journal article" date="2013" name="PLoS Genet.">
        <title>Global analysis of fission yeast mating genes reveals new autophagy factors.</title>
        <authorList>
            <person name="Sun L.L."/>
            <person name="Li M."/>
            <person name="Suo F."/>
            <person name="Liu X.M."/>
            <person name="Shen E.Z."/>
            <person name="Yang B."/>
            <person name="Dong M.Q."/>
            <person name="He W.Z."/>
            <person name="Du L.L."/>
        </authorList>
    </citation>
    <scope>DISRUPTION PHENOTYPE</scope>
    <scope>FUNCTION</scope>
    <scope>SUBCELLULAR LOCATION</scope>
    <scope>INTERACTION WITH CTL1</scope>
</reference>
<reference evidence="9" key="4">
    <citation type="journal article" date="2020" name="Nat. Struct. Mol. Biol.">
        <title>Atg9 is a lipid scramblase that mediates autophagosomal membrane expansion.</title>
        <authorList>
            <person name="Matoba K."/>
            <person name="Kotani T."/>
            <person name="Tsutsumi A."/>
            <person name="Tsuji T."/>
            <person name="Mori T."/>
            <person name="Noshiro D."/>
            <person name="Sugita Y."/>
            <person name="Nomura N."/>
            <person name="Iwata S."/>
            <person name="Ohsumi Y."/>
            <person name="Fujimoto T."/>
            <person name="Nakatogawa H."/>
            <person name="Kikkawa M."/>
            <person name="Noda N.N."/>
        </authorList>
    </citation>
    <scope>STRUCTURE BY ELECTRON MICROSCOPY (3.00 ANGSTROMS)</scope>
    <scope>SUBUNIT</scope>
    <scope>TOPOLOGY</scope>
    <scope>DOMAIN</scope>
</reference>